<reference key="1">
    <citation type="journal article" date="2011" name="J. Bacteriol.">
        <title>Comparative genomics of 28 Salmonella enterica isolates: evidence for CRISPR-mediated adaptive sublineage evolution.</title>
        <authorList>
            <person name="Fricke W.F."/>
            <person name="Mammel M.K."/>
            <person name="McDermott P.F."/>
            <person name="Tartera C."/>
            <person name="White D.G."/>
            <person name="Leclerc J.E."/>
            <person name="Ravel J."/>
            <person name="Cebula T.A."/>
        </authorList>
    </citation>
    <scope>NUCLEOTIDE SEQUENCE [LARGE SCALE GENOMIC DNA]</scope>
    <source>
        <strain>SL254</strain>
    </source>
</reference>
<protein>
    <recommendedName>
        <fullName evidence="1">Small ribosomal subunit protein uS17</fullName>
    </recommendedName>
    <alternativeName>
        <fullName evidence="2">30S ribosomal protein S17</fullName>
    </alternativeName>
</protein>
<proteinExistence type="inferred from homology"/>
<name>RS17_SALNS</name>
<organism>
    <name type="scientific">Salmonella newport (strain SL254)</name>
    <dbReference type="NCBI Taxonomy" id="423368"/>
    <lineage>
        <taxon>Bacteria</taxon>
        <taxon>Pseudomonadati</taxon>
        <taxon>Pseudomonadota</taxon>
        <taxon>Gammaproteobacteria</taxon>
        <taxon>Enterobacterales</taxon>
        <taxon>Enterobacteriaceae</taxon>
        <taxon>Salmonella</taxon>
    </lineage>
</organism>
<dbReference type="EMBL" id="CP001113">
    <property type="protein sequence ID" value="ACF61340.1"/>
    <property type="molecule type" value="Genomic_DNA"/>
</dbReference>
<dbReference type="RefSeq" id="WP_000130101.1">
    <property type="nucleotide sequence ID" value="NZ_CCMR01000003.1"/>
</dbReference>
<dbReference type="SMR" id="B4SUT1"/>
<dbReference type="GeneID" id="66757766"/>
<dbReference type="KEGG" id="see:SNSL254_A3700"/>
<dbReference type="HOGENOM" id="CLU_073626_1_1_6"/>
<dbReference type="Proteomes" id="UP000008824">
    <property type="component" value="Chromosome"/>
</dbReference>
<dbReference type="GO" id="GO:0022627">
    <property type="term" value="C:cytosolic small ribosomal subunit"/>
    <property type="evidence" value="ECO:0007669"/>
    <property type="project" value="TreeGrafter"/>
</dbReference>
<dbReference type="GO" id="GO:0019843">
    <property type="term" value="F:rRNA binding"/>
    <property type="evidence" value="ECO:0007669"/>
    <property type="project" value="UniProtKB-UniRule"/>
</dbReference>
<dbReference type="GO" id="GO:0003735">
    <property type="term" value="F:structural constituent of ribosome"/>
    <property type="evidence" value="ECO:0007669"/>
    <property type="project" value="InterPro"/>
</dbReference>
<dbReference type="GO" id="GO:0006412">
    <property type="term" value="P:translation"/>
    <property type="evidence" value="ECO:0007669"/>
    <property type="project" value="UniProtKB-UniRule"/>
</dbReference>
<dbReference type="CDD" id="cd00364">
    <property type="entry name" value="Ribosomal_uS17"/>
    <property type="match status" value="1"/>
</dbReference>
<dbReference type="FunFam" id="2.40.50.140:FF:000014">
    <property type="entry name" value="30S ribosomal protein S17"/>
    <property type="match status" value="1"/>
</dbReference>
<dbReference type="Gene3D" id="2.40.50.140">
    <property type="entry name" value="Nucleic acid-binding proteins"/>
    <property type="match status" value="1"/>
</dbReference>
<dbReference type="HAMAP" id="MF_01345_B">
    <property type="entry name" value="Ribosomal_uS17_B"/>
    <property type="match status" value="1"/>
</dbReference>
<dbReference type="InterPro" id="IPR012340">
    <property type="entry name" value="NA-bd_OB-fold"/>
</dbReference>
<dbReference type="InterPro" id="IPR000266">
    <property type="entry name" value="Ribosomal_uS17"/>
</dbReference>
<dbReference type="InterPro" id="IPR019984">
    <property type="entry name" value="Ribosomal_uS17_bact/chlr"/>
</dbReference>
<dbReference type="InterPro" id="IPR019979">
    <property type="entry name" value="Ribosomal_uS17_CS"/>
</dbReference>
<dbReference type="NCBIfam" id="NF004123">
    <property type="entry name" value="PRK05610.1"/>
    <property type="match status" value="1"/>
</dbReference>
<dbReference type="NCBIfam" id="TIGR03635">
    <property type="entry name" value="uS17_bact"/>
    <property type="match status" value="1"/>
</dbReference>
<dbReference type="PANTHER" id="PTHR10744">
    <property type="entry name" value="40S RIBOSOMAL PROTEIN S11 FAMILY MEMBER"/>
    <property type="match status" value="1"/>
</dbReference>
<dbReference type="PANTHER" id="PTHR10744:SF1">
    <property type="entry name" value="SMALL RIBOSOMAL SUBUNIT PROTEIN US17M"/>
    <property type="match status" value="1"/>
</dbReference>
<dbReference type="Pfam" id="PF00366">
    <property type="entry name" value="Ribosomal_S17"/>
    <property type="match status" value="1"/>
</dbReference>
<dbReference type="PRINTS" id="PR00973">
    <property type="entry name" value="RIBOSOMALS17"/>
</dbReference>
<dbReference type="SUPFAM" id="SSF50249">
    <property type="entry name" value="Nucleic acid-binding proteins"/>
    <property type="match status" value="1"/>
</dbReference>
<dbReference type="PROSITE" id="PS00056">
    <property type="entry name" value="RIBOSOMAL_S17"/>
    <property type="match status" value="1"/>
</dbReference>
<sequence>MTDKIRTLQGRVVSDKMEKSIVVAIERFVKHPIYGKFIKRTTKMHVHDENNECGIGDVVEIRECRPLSKTKSWTLVRVVEKAVL</sequence>
<keyword id="KW-0687">Ribonucleoprotein</keyword>
<keyword id="KW-0689">Ribosomal protein</keyword>
<keyword id="KW-0694">RNA-binding</keyword>
<keyword id="KW-0699">rRNA-binding</keyword>
<gene>
    <name evidence="1" type="primary">rpsQ</name>
    <name type="ordered locus">SNSL254_A3700</name>
</gene>
<accession>B4SUT1</accession>
<evidence type="ECO:0000255" key="1">
    <source>
        <dbReference type="HAMAP-Rule" id="MF_01345"/>
    </source>
</evidence>
<evidence type="ECO:0000305" key="2"/>
<feature type="chain" id="PRO_1000143299" description="Small ribosomal subunit protein uS17">
    <location>
        <begin position="1"/>
        <end position="84"/>
    </location>
</feature>
<comment type="function">
    <text evidence="1">One of the primary rRNA binding proteins, it binds specifically to the 5'-end of 16S ribosomal RNA.</text>
</comment>
<comment type="subunit">
    <text evidence="1">Part of the 30S ribosomal subunit.</text>
</comment>
<comment type="similarity">
    <text evidence="1">Belongs to the universal ribosomal protein uS17 family.</text>
</comment>